<feature type="chain" id="PRO_1000069731" description="Bifunctional protein GlmU">
    <location>
        <begin position="1"/>
        <end position="456"/>
    </location>
</feature>
<feature type="region of interest" description="Pyrophosphorylase" evidence="1">
    <location>
        <begin position="1"/>
        <end position="229"/>
    </location>
</feature>
<feature type="region of interest" description="Linker" evidence="1">
    <location>
        <begin position="230"/>
        <end position="250"/>
    </location>
</feature>
<feature type="region of interest" description="N-acetyltransferase" evidence="1">
    <location>
        <begin position="251"/>
        <end position="456"/>
    </location>
</feature>
<feature type="active site" description="Proton acceptor" evidence="1">
    <location>
        <position position="363"/>
    </location>
</feature>
<feature type="binding site" evidence="1">
    <location>
        <begin position="11"/>
        <end position="14"/>
    </location>
    <ligand>
        <name>UDP-N-acetyl-alpha-D-glucosamine</name>
        <dbReference type="ChEBI" id="CHEBI:57705"/>
    </ligand>
</feature>
<feature type="binding site" evidence="1">
    <location>
        <position position="25"/>
    </location>
    <ligand>
        <name>UDP-N-acetyl-alpha-D-glucosamine</name>
        <dbReference type="ChEBI" id="CHEBI:57705"/>
    </ligand>
</feature>
<feature type="binding site" evidence="1">
    <location>
        <position position="76"/>
    </location>
    <ligand>
        <name>UDP-N-acetyl-alpha-D-glucosamine</name>
        <dbReference type="ChEBI" id="CHEBI:57705"/>
    </ligand>
</feature>
<feature type="binding site" evidence="1">
    <location>
        <begin position="81"/>
        <end position="82"/>
    </location>
    <ligand>
        <name>UDP-N-acetyl-alpha-D-glucosamine</name>
        <dbReference type="ChEBI" id="CHEBI:57705"/>
    </ligand>
</feature>
<feature type="binding site" evidence="1">
    <location>
        <begin position="103"/>
        <end position="105"/>
    </location>
    <ligand>
        <name>UDP-N-acetyl-alpha-D-glucosamine</name>
        <dbReference type="ChEBI" id="CHEBI:57705"/>
    </ligand>
</feature>
<feature type="binding site" evidence="1">
    <location>
        <position position="105"/>
    </location>
    <ligand>
        <name>Mg(2+)</name>
        <dbReference type="ChEBI" id="CHEBI:18420"/>
    </ligand>
</feature>
<feature type="binding site" evidence="1">
    <location>
        <position position="140"/>
    </location>
    <ligand>
        <name>UDP-N-acetyl-alpha-D-glucosamine</name>
        <dbReference type="ChEBI" id="CHEBI:57705"/>
    </ligand>
</feature>
<feature type="binding site" evidence="1">
    <location>
        <position position="154"/>
    </location>
    <ligand>
        <name>UDP-N-acetyl-alpha-D-glucosamine</name>
        <dbReference type="ChEBI" id="CHEBI:57705"/>
    </ligand>
</feature>
<feature type="binding site" evidence="1">
    <location>
        <position position="169"/>
    </location>
    <ligand>
        <name>UDP-N-acetyl-alpha-D-glucosamine</name>
        <dbReference type="ChEBI" id="CHEBI:57705"/>
    </ligand>
</feature>
<feature type="binding site" evidence="1">
    <location>
        <position position="227"/>
    </location>
    <ligand>
        <name>Mg(2+)</name>
        <dbReference type="ChEBI" id="CHEBI:18420"/>
    </ligand>
</feature>
<feature type="binding site" evidence="1">
    <location>
        <position position="227"/>
    </location>
    <ligand>
        <name>UDP-N-acetyl-alpha-D-glucosamine</name>
        <dbReference type="ChEBI" id="CHEBI:57705"/>
    </ligand>
</feature>
<feature type="binding site" evidence="1">
    <location>
        <position position="333"/>
    </location>
    <ligand>
        <name>UDP-N-acetyl-alpha-D-glucosamine</name>
        <dbReference type="ChEBI" id="CHEBI:57705"/>
    </ligand>
</feature>
<feature type="binding site" evidence="1">
    <location>
        <position position="351"/>
    </location>
    <ligand>
        <name>UDP-N-acetyl-alpha-D-glucosamine</name>
        <dbReference type="ChEBI" id="CHEBI:57705"/>
    </ligand>
</feature>
<feature type="binding site" evidence="1">
    <location>
        <position position="366"/>
    </location>
    <ligand>
        <name>UDP-N-acetyl-alpha-D-glucosamine</name>
        <dbReference type="ChEBI" id="CHEBI:57705"/>
    </ligand>
</feature>
<feature type="binding site" evidence="1">
    <location>
        <position position="377"/>
    </location>
    <ligand>
        <name>UDP-N-acetyl-alpha-D-glucosamine</name>
        <dbReference type="ChEBI" id="CHEBI:57705"/>
    </ligand>
</feature>
<feature type="binding site" evidence="1">
    <location>
        <position position="380"/>
    </location>
    <ligand>
        <name>acetyl-CoA</name>
        <dbReference type="ChEBI" id="CHEBI:57288"/>
    </ligand>
</feature>
<feature type="binding site" evidence="1">
    <location>
        <begin position="386"/>
        <end position="387"/>
    </location>
    <ligand>
        <name>acetyl-CoA</name>
        <dbReference type="ChEBI" id="CHEBI:57288"/>
    </ligand>
</feature>
<feature type="binding site" evidence="1">
    <location>
        <position position="405"/>
    </location>
    <ligand>
        <name>acetyl-CoA</name>
        <dbReference type="ChEBI" id="CHEBI:57288"/>
    </ligand>
</feature>
<feature type="binding site" evidence="1">
    <location>
        <position position="423"/>
    </location>
    <ligand>
        <name>acetyl-CoA</name>
        <dbReference type="ChEBI" id="CHEBI:57288"/>
    </ligand>
</feature>
<feature type="binding site" evidence="1">
    <location>
        <position position="440"/>
    </location>
    <ligand>
        <name>acetyl-CoA</name>
        <dbReference type="ChEBI" id="CHEBI:57288"/>
    </ligand>
</feature>
<protein>
    <recommendedName>
        <fullName evidence="1">Bifunctional protein GlmU</fullName>
    </recommendedName>
    <domain>
        <recommendedName>
            <fullName evidence="1">UDP-N-acetylglucosamine pyrophosphorylase</fullName>
            <ecNumber evidence="1">2.7.7.23</ecNumber>
        </recommendedName>
        <alternativeName>
            <fullName evidence="1">N-acetylglucosamine-1-phosphate uridyltransferase</fullName>
        </alternativeName>
    </domain>
    <domain>
        <recommendedName>
            <fullName evidence="1">Glucosamine-1-phosphate N-acetyltransferase</fullName>
            <ecNumber evidence="1">2.3.1.157</ecNumber>
        </recommendedName>
    </domain>
</protein>
<comment type="function">
    <text evidence="1">Catalyzes the last two sequential reactions in the de novo biosynthetic pathway for UDP-N-acetylglucosamine (UDP-GlcNAc). The C-terminal domain catalyzes the transfer of acetyl group from acetyl coenzyme A to glucosamine-1-phosphate (GlcN-1-P) to produce N-acetylglucosamine-1-phosphate (GlcNAc-1-P), which is converted into UDP-GlcNAc by the transfer of uridine 5-monophosphate (from uridine 5-triphosphate), a reaction catalyzed by the N-terminal domain.</text>
</comment>
<comment type="catalytic activity">
    <reaction evidence="1">
        <text>alpha-D-glucosamine 1-phosphate + acetyl-CoA = N-acetyl-alpha-D-glucosamine 1-phosphate + CoA + H(+)</text>
        <dbReference type="Rhea" id="RHEA:13725"/>
        <dbReference type="ChEBI" id="CHEBI:15378"/>
        <dbReference type="ChEBI" id="CHEBI:57287"/>
        <dbReference type="ChEBI" id="CHEBI:57288"/>
        <dbReference type="ChEBI" id="CHEBI:57776"/>
        <dbReference type="ChEBI" id="CHEBI:58516"/>
        <dbReference type="EC" id="2.3.1.157"/>
    </reaction>
</comment>
<comment type="catalytic activity">
    <reaction evidence="1">
        <text>N-acetyl-alpha-D-glucosamine 1-phosphate + UTP + H(+) = UDP-N-acetyl-alpha-D-glucosamine + diphosphate</text>
        <dbReference type="Rhea" id="RHEA:13509"/>
        <dbReference type="ChEBI" id="CHEBI:15378"/>
        <dbReference type="ChEBI" id="CHEBI:33019"/>
        <dbReference type="ChEBI" id="CHEBI:46398"/>
        <dbReference type="ChEBI" id="CHEBI:57705"/>
        <dbReference type="ChEBI" id="CHEBI:57776"/>
        <dbReference type="EC" id="2.7.7.23"/>
    </reaction>
</comment>
<comment type="cofactor">
    <cofactor evidence="1">
        <name>Mg(2+)</name>
        <dbReference type="ChEBI" id="CHEBI:18420"/>
    </cofactor>
    <text evidence="1">Binds 1 Mg(2+) ion per subunit.</text>
</comment>
<comment type="pathway">
    <text evidence="1">Nucleotide-sugar biosynthesis; UDP-N-acetyl-alpha-D-glucosamine biosynthesis; N-acetyl-alpha-D-glucosamine 1-phosphate from alpha-D-glucosamine 6-phosphate (route II): step 2/2.</text>
</comment>
<comment type="pathway">
    <text evidence="1">Nucleotide-sugar biosynthesis; UDP-N-acetyl-alpha-D-glucosamine biosynthesis; UDP-N-acetyl-alpha-D-glucosamine from N-acetyl-alpha-D-glucosamine 1-phosphate: step 1/1.</text>
</comment>
<comment type="pathway">
    <text evidence="1">Bacterial outer membrane biogenesis; LPS lipid A biosynthesis.</text>
</comment>
<comment type="subunit">
    <text evidence="1">Homotrimer.</text>
</comment>
<comment type="subcellular location">
    <subcellularLocation>
        <location evidence="1">Cytoplasm</location>
    </subcellularLocation>
</comment>
<comment type="similarity">
    <text evidence="1">In the N-terminal section; belongs to the N-acetylglucosamine-1-phosphate uridyltransferase family.</text>
</comment>
<comment type="similarity">
    <text evidence="1">In the C-terminal section; belongs to the transferase hexapeptide repeat family.</text>
</comment>
<accession>A8A6J2</accession>
<gene>
    <name evidence="1" type="primary">glmU</name>
    <name type="ordered locus">EcHS_A3945</name>
</gene>
<name>GLMU_ECOHS</name>
<proteinExistence type="inferred from homology"/>
<organism>
    <name type="scientific">Escherichia coli O9:H4 (strain HS)</name>
    <dbReference type="NCBI Taxonomy" id="331112"/>
    <lineage>
        <taxon>Bacteria</taxon>
        <taxon>Pseudomonadati</taxon>
        <taxon>Pseudomonadota</taxon>
        <taxon>Gammaproteobacteria</taxon>
        <taxon>Enterobacterales</taxon>
        <taxon>Enterobacteriaceae</taxon>
        <taxon>Escherichia</taxon>
    </lineage>
</organism>
<dbReference type="EC" id="2.7.7.23" evidence="1"/>
<dbReference type="EC" id="2.3.1.157" evidence="1"/>
<dbReference type="EMBL" id="CP000802">
    <property type="protein sequence ID" value="ABV08146.1"/>
    <property type="molecule type" value="Genomic_DNA"/>
</dbReference>
<dbReference type="RefSeq" id="WP_000933736.1">
    <property type="nucleotide sequence ID" value="NC_009800.1"/>
</dbReference>
<dbReference type="SMR" id="A8A6J2"/>
<dbReference type="GeneID" id="75205448"/>
<dbReference type="KEGG" id="ecx:EcHS_A3945"/>
<dbReference type="HOGENOM" id="CLU_029499_15_2_6"/>
<dbReference type="UniPathway" id="UPA00113">
    <property type="reaction ID" value="UER00532"/>
</dbReference>
<dbReference type="UniPathway" id="UPA00113">
    <property type="reaction ID" value="UER00533"/>
</dbReference>
<dbReference type="UniPathway" id="UPA00973"/>
<dbReference type="GO" id="GO:0005737">
    <property type="term" value="C:cytoplasm"/>
    <property type="evidence" value="ECO:0007669"/>
    <property type="project" value="UniProtKB-SubCell"/>
</dbReference>
<dbReference type="GO" id="GO:0016020">
    <property type="term" value="C:membrane"/>
    <property type="evidence" value="ECO:0007669"/>
    <property type="project" value="GOC"/>
</dbReference>
<dbReference type="GO" id="GO:0019134">
    <property type="term" value="F:glucosamine-1-phosphate N-acetyltransferase activity"/>
    <property type="evidence" value="ECO:0007669"/>
    <property type="project" value="UniProtKB-UniRule"/>
</dbReference>
<dbReference type="GO" id="GO:0000287">
    <property type="term" value="F:magnesium ion binding"/>
    <property type="evidence" value="ECO:0007669"/>
    <property type="project" value="UniProtKB-UniRule"/>
</dbReference>
<dbReference type="GO" id="GO:0003977">
    <property type="term" value="F:UDP-N-acetylglucosamine diphosphorylase activity"/>
    <property type="evidence" value="ECO:0007669"/>
    <property type="project" value="UniProtKB-UniRule"/>
</dbReference>
<dbReference type="GO" id="GO:0000902">
    <property type="term" value="P:cell morphogenesis"/>
    <property type="evidence" value="ECO:0007669"/>
    <property type="project" value="UniProtKB-UniRule"/>
</dbReference>
<dbReference type="GO" id="GO:0071555">
    <property type="term" value="P:cell wall organization"/>
    <property type="evidence" value="ECO:0007669"/>
    <property type="project" value="UniProtKB-KW"/>
</dbReference>
<dbReference type="GO" id="GO:0009245">
    <property type="term" value="P:lipid A biosynthetic process"/>
    <property type="evidence" value="ECO:0007669"/>
    <property type="project" value="UniProtKB-UniRule"/>
</dbReference>
<dbReference type="GO" id="GO:0009252">
    <property type="term" value="P:peptidoglycan biosynthetic process"/>
    <property type="evidence" value="ECO:0007669"/>
    <property type="project" value="UniProtKB-UniRule"/>
</dbReference>
<dbReference type="GO" id="GO:0008360">
    <property type="term" value="P:regulation of cell shape"/>
    <property type="evidence" value="ECO:0007669"/>
    <property type="project" value="UniProtKB-KW"/>
</dbReference>
<dbReference type="GO" id="GO:0006048">
    <property type="term" value="P:UDP-N-acetylglucosamine biosynthetic process"/>
    <property type="evidence" value="ECO:0007669"/>
    <property type="project" value="UniProtKB-UniPathway"/>
</dbReference>
<dbReference type="CDD" id="cd02540">
    <property type="entry name" value="GT2_GlmU_N_bac"/>
    <property type="match status" value="1"/>
</dbReference>
<dbReference type="CDD" id="cd03353">
    <property type="entry name" value="LbH_GlmU_C"/>
    <property type="match status" value="1"/>
</dbReference>
<dbReference type="FunFam" id="2.160.10.10:FF:000011">
    <property type="entry name" value="Bifunctional protein GlmU"/>
    <property type="match status" value="1"/>
</dbReference>
<dbReference type="FunFam" id="3.90.550.10:FF:000006">
    <property type="entry name" value="Bifunctional protein GlmU"/>
    <property type="match status" value="1"/>
</dbReference>
<dbReference type="Gene3D" id="2.160.10.10">
    <property type="entry name" value="Hexapeptide repeat proteins"/>
    <property type="match status" value="1"/>
</dbReference>
<dbReference type="Gene3D" id="3.90.550.10">
    <property type="entry name" value="Spore Coat Polysaccharide Biosynthesis Protein SpsA, Chain A"/>
    <property type="match status" value="1"/>
</dbReference>
<dbReference type="HAMAP" id="MF_01631">
    <property type="entry name" value="GlmU"/>
    <property type="match status" value="1"/>
</dbReference>
<dbReference type="InterPro" id="IPR005882">
    <property type="entry name" value="Bifunctional_GlmU"/>
</dbReference>
<dbReference type="InterPro" id="IPR050065">
    <property type="entry name" value="GlmU-like"/>
</dbReference>
<dbReference type="InterPro" id="IPR038009">
    <property type="entry name" value="GlmU_C_LbH"/>
</dbReference>
<dbReference type="InterPro" id="IPR001451">
    <property type="entry name" value="Hexapep"/>
</dbReference>
<dbReference type="InterPro" id="IPR018357">
    <property type="entry name" value="Hexapep_transf_CS"/>
</dbReference>
<dbReference type="InterPro" id="IPR025877">
    <property type="entry name" value="MobA-like_NTP_Trfase"/>
</dbReference>
<dbReference type="InterPro" id="IPR029044">
    <property type="entry name" value="Nucleotide-diphossugar_trans"/>
</dbReference>
<dbReference type="InterPro" id="IPR011004">
    <property type="entry name" value="Trimer_LpxA-like_sf"/>
</dbReference>
<dbReference type="NCBIfam" id="TIGR01173">
    <property type="entry name" value="glmU"/>
    <property type="match status" value="1"/>
</dbReference>
<dbReference type="NCBIfam" id="NF006986">
    <property type="entry name" value="PRK09451.1"/>
    <property type="match status" value="1"/>
</dbReference>
<dbReference type="PANTHER" id="PTHR43584:SF3">
    <property type="entry name" value="BIFUNCTIONAL PROTEIN GLMU"/>
    <property type="match status" value="1"/>
</dbReference>
<dbReference type="PANTHER" id="PTHR43584">
    <property type="entry name" value="NUCLEOTIDYL TRANSFERASE"/>
    <property type="match status" value="1"/>
</dbReference>
<dbReference type="Pfam" id="PF00132">
    <property type="entry name" value="Hexapep"/>
    <property type="match status" value="1"/>
</dbReference>
<dbReference type="Pfam" id="PF12804">
    <property type="entry name" value="NTP_transf_3"/>
    <property type="match status" value="1"/>
</dbReference>
<dbReference type="SUPFAM" id="SSF53448">
    <property type="entry name" value="Nucleotide-diphospho-sugar transferases"/>
    <property type="match status" value="1"/>
</dbReference>
<dbReference type="SUPFAM" id="SSF51161">
    <property type="entry name" value="Trimeric LpxA-like enzymes"/>
    <property type="match status" value="1"/>
</dbReference>
<dbReference type="PROSITE" id="PS00101">
    <property type="entry name" value="HEXAPEP_TRANSFERASES"/>
    <property type="match status" value="1"/>
</dbReference>
<reference key="1">
    <citation type="journal article" date="2008" name="J. Bacteriol.">
        <title>The pangenome structure of Escherichia coli: comparative genomic analysis of E. coli commensal and pathogenic isolates.</title>
        <authorList>
            <person name="Rasko D.A."/>
            <person name="Rosovitz M.J."/>
            <person name="Myers G.S.A."/>
            <person name="Mongodin E.F."/>
            <person name="Fricke W.F."/>
            <person name="Gajer P."/>
            <person name="Crabtree J."/>
            <person name="Sebaihia M."/>
            <person name="Thomson N.R."/>
            <person name="Chaudhuri R."/>
            <person name="Henderson I.R."/>
            <person name="Sperandio V."/>
            <person name="Ravel J."/>
        </authorList>
    </citation>
    <scope>NUCLEOTIDE SEQUENCE [LARGE SCALE GENOMIC DNA]</scope>
    <source>
        <strain>HS</strain>
    </source>
</reference>
<sequence length="456" mass="49190">MLNNAMSVVILAAGKGTRMYSDLPKVLHTLAGKAMVQHVIDAANELGAAHVHLVYGHGGDLLKQALKDDNLNWVLQAEQLGTGHAMQQAAPFFADDEDILMLYGDVPLISVETLQRLRDAKPQGGIGLLTVKLDDPTGYGRITRENGKVTGIVEHKDATDEQRQIQEINTGILIANGADMKRWLAKLTNNNAQGEYYITDIIALAYQEGREIVAVHPQRLSEVEGVNNRLQLSRLERVYQSEQAEKLLLAGVMLRDPARFDLRGTLTHGRDVEIDTNVIIEGNVTLGHRVKIGTGCVIKNSVIGDDCEISPYTVVEDANLAAACTIGPFARLRPGAELLEGAHVGNFVEMKKARLGKGSKAGHLTYLGDAEIGDNVNIGAGTITCNYDGANKFKTIIGDDVFVGSDTQLVAPVTVGKGATIAAGTTVTRNVGENALAISRVPQTQKEGWRRPVKKK</sequence>
<evidence type="ECO:0000255" key="1">
    <source>
        <dbReference type="HAMAP-Rule" id="MF_01631"/>
    </source>
</evidence>
<keyword id="KW-0012">Acyltransferase</keyword>
<keyword id="KW-0133">Cell shape</keyword>
<keyword id="KW-0961">Cell wall biogenesis/degradation</keyword>
<keyword id="KW-0963">Cytoplasm</keyword>
<keyword id="KW-0460">Magnesium</keyword>
<keyword id="KW-0479">Metal-binding</keyword>
<keyword id="KW-0511">Multifunctional enzyme</keyword>
<keyword id="KW-0548">Nucleotidyltransferase</keyword>
<keyword id="KW-0573">Peptidoglycan synthesis</keyword>
<keyword id="KW-0677">Repeat</keyword>
<keyword id="KW-0808">Transferase</keyword>